<organism>
    <name type="scientific">Drosophila willistoni</name>
    <name type="common">Fruit fly</name>
    <dbReference type="NCBI Taxonomy" id="7260"/>
    <lineage>
        <taxon>Eukaryota</taxon>
        <taxon>Metazoa</taxon>
        <taxon>Ecdysozoa</taxon>
        <taxon>Arthropoda</taxon>
        <taxon>Hexapoda</taxon>
        <taxon>Insecta</taxon>
        <taxon>Pterygota</taxon>
        <taxon>Neoptera</taxon>
        <taxon>Endopterygota</taxon>
        <taxon>Diptera</taxon>
        <taxon>Brachycera</taxon>
        <taxon>Muscomorpha</taxon>
        <taxon>Ephydroidea</taxon>
        <taxon>Drosophilidae</taxon>
        <taxon>Drosophila</taxon>
        <taxon>Sophophora</taxon>
    </lineage>
</organism>
<protein>
    <recommendedName>
        <fullName evidence="2">Serine/threonine-protein phosphatase Pgam5, mitochondrial</fullName>
        <ecNumber>3.1.3.16</ecNumber>
    </recommendedName>
    <alternativeName>
        <fullName evidence="2">Phosphoglycerate mutase family member 5 homolog</fullName>
    </alternativeName>
</protein>
<feature type="chain" id="PRO_0000390711" description="Serine/threonine-protein phosphatase Pgam5, mitochondrial">
    <location>
        <begin position="1"/>
        <end position="291"/>
    </location>
</feature>
<feature type="transmembrane region" description="Helical" evidence="3">
    <location>
        <begin position="7"/>
        <end position="23"/>
    </location>
</feature>
<feature type="region of interest" description="Disordered" evidence="4">
    <location>
        <begin position="59"/>
        <end position="78"/>
    </location>
</feature>
<feature type="compositionally biased region" description="Polar residues" evidence="4">
    <location>
        <begin position="67"/>
        <end position="77"/>
    </location>
</feature>
<sequence>MRKFTAFACGTGAGLAAFYLQRLRDPKQTAWVHNSWTNSERPVDSWALWDSNWDCRDPKSLVRPQKNEQPQEQNRYNSDFEKNHAKSARHIILIRHGEYLDVGDTDDTHHLTERGREQAKFTGQRLHDLGIKWDKVIASTMVRAQETADIILNEIDYDKAKVTNCAYLREGAPIPPQPPVGHWKPEASQFFRDGARIEAAFRRYFHRAYPDQTKESYTLIVGHGNVIRYFVCRALQFPPEAWLRISINHASITWLTISPSGNVSIKYLGDSGFMPVKHLTNRIPRDAKNVV</sequence>
<dbReference type="EC" id="3.1.3.16"/>
<dbReference type="EMBL" id="CH964239">
    <property type="protein sequence ID" value="EDW82065.1"/>
    <property type="molecule type" value="Genomic_DNA"/>
</dbReference>
<dbReference type="SMR" id="B4NE96"/>
<dbReference type="STRING" id="7260.B4NE96"/>
<dbReference type="EnsemblMetazoa" id="FBtr0256258">
    <property type="protein sequence ID" value="FBpp0254750"/>
    <property type="gene ID" value="FBgn0227566"/>
</dbReference>
<dbReference type="EnsemblMetazoa" id="XM_002071043.4">
    <property type="protein sequence ID" value="XP_002071079.1"/>
    <property type="gene ID" value="LOC6648756"/>
</dbReference>
<dbReference type="GeneID" id="6648756"/>
<dbReference type="KEGG" id="dwi:6648756"/>
<dbReference type="CTD" id="192111"/>
<dbReference type="eggNOG" id="KOG4609">
    <property type="taxonomic scope" value="Eukaryota"/>
</dbReference>
<dbReference type="HOGENOM" id="CLU_063130_0_1_1"/>
<dbReference type="OMA" id="MPMEMIT"/>
<dbReference type="OrthoDB" id="2118094at2759"/>
<dbReference type="PhylomeDB" id="B4NE96"/>
<dbReference type="Proteomes" id="UP000007798">
    <property type="component" value="Unassembled WGS sequence"/>
</dbReference>
<dbReference type="GO" id="GO:0005741">
    <property type="term" value="C:mitochondrial outer membrane"/>
    <property type="evidence" value="ECO:0007669"/>
    <property type="project" value="UniProtKB-SubCell"/>
</dbReference>
<dbReference type="GO" id="GO:0004721">
    <property type="term" value="F:phosphoprotein phosphatase activity"/>
    <property type="evidence" value="ECO:0000250"/>
    <property type="project" value="UniProtKB"/>
</dbReference>
<dbReference type="GO" id="GO:0004722">
    <property type="term" value="F:protein serine/threonine phosphatase activity"/>
    <property type="evidence" value="ECO:0007669"/>
    <property type="project" value="UniProtKB-EC"/>
</dbReference>
<dbReference type="GO" id="GO:0090141">
    <property type="term" value="P:positive regulation of mitochondrial fission"/>
    <property type="evidence" value="ECO:0007669"/>
    <property type="project" value="TreeGrafter"/>
</dbReference>
<dbReference type="GO" id="GO:0006470">
    <property type="term" value="P:protein dephosphorylation"/>
    <property type="evidence" value="ECO:0000250"/>
    <property type="project" value="UniProtKB"/>
</dbReference>
<dbReference type="CDD" id="cd07067">
    <property type="entry name" value="HP_PGM_like"/>
    <property type="match status" value="1"/>
</dbReference>
<dbReference type="FunFam" id="3.40.50.1240:FF:000009">
    <property type="entry name" value="serine/threonine-protein phosphatase PGAM5, mitochondrial isoform X1"/>
    <property type="match status" value="1"/>
</dbReference>
<dbReference type="Gene3D" id="3.40.50.1240">
    <property type="entry name" value="Phosphoglycerate mutase-like"/>
    <property type="match status" value="1"/>
</dbReference>
<dbReference type="InterPro" id="IPR013078">
    <property type="entry name" value="His_Pase_superF_clade-1"/>
</dbReference>
<dbReference type="InterPro" id="IPR029033">
    <property type="entry name" value="His_PPase_superfam"/>
</dbReference>
<dbReference type="InterPro" id="IPR051021">
    <property type="entry name" value="Mito_Ser/Thr_phosphatase"/>
</dbReference>
<dbReference type="PANTHER" id="PTHR20935">
    <property type="entry name" value="PHOSPHOGLYCERATE MUTASE-RELATED"/>
    <property type="match status" value="1"/>
</dbReference>
<dbReference type="PANTHER" id="PTHR20935:SF0">
    <property type="entry name" value="SERINE_THREONINE-PROTEIN PHOSPHATASE PGAM5, MITOCHONDRIAL"/>
    <property type="match status" value="1"/>
</dbReference>
<dbReference type="Pfam" id="PF00300">
    <property type="entry name" value="His_Phos_1"/>
    <property type="match status" value="2"/>
</dbReference>
<dbReference type="SMART" id="SM00855">
    <property type="entry name" value="PGAM"/>
    <property type="match status" value="1"/>
</dbReference>
<dbReference type="SUPFAM" id="SSF53254">
    <property type="entry name" value="Phosphoglycerate mutase-like"/>
    <property type="match status" value="1"/>
</dbReference>
<name>PGAM5_DROWI</name>
<gene>
    <name evidence="2" type="primary">Pgam5</name>
    <name type="ORF">GK25607</name>
</gene>
<accession>B4NE96</accession>
<evidence type="ECO:0000250" key="1"/>
<evidence type="ECO:0000250" key="2">
    <source>
        <dbReference type="UniProtKB" id="O46084"/>
    </source>
</evidence>
<evidence type="ECO:0000255" key="3"/>
<evidence type="ECO:0000256" key="4">
    <source>
        <dbReference type="SAM" id="MobiDB-lite"/>
    </source>
</evidence>
<evidence type="ECO:0000312" key="5">
    <source>
        <dbReference type="EMBL" id="EDW82065.1"/>
    </source>
</evidence>
<comment type="function">
    <text evidence="2">Displays phosphatase activity for serine/threonine residues, and dephosphorylates and activates Pk92B kinase. Has apparently no phosphoglycerate mutase activity (By similarity).</text>
</comment>
<comment type="catalytic activity">
    <reaction>
        <text>O-phospho-L-seryl-[protein] + H2O = L-seryl-[protein] + phosphate</text>
        <dbReference type="Rhea" id="RHEA:20629"/>
        <dbReference type="Rhea" id="RHEA-COMP:9863"/>
        <dbReference type="Rhea" id="RHEA-COMP:11604"/>
        <dbReference type="ChEBI" id="CHEBI:15377"/>
        <dbReference type="ChEBI" id="CHEBI:29999"/>
        <dbReference type="ChEBI" id="CHEBI:43474"/>
        <dbReference type="ChEBI" id="CHEBI:83421"/>
        <dbReference type="EC" id="3.1.3.16"/>
    </reaction>
</comment>
<comment type="catalytic activity">
    <reaction>
        <text>O-phospho-L-threonyl-[protein] + H2O = L-threonyl-[protein] + phosphate</text>
        <dbReference type="Rhea" id="RHEA:47004"/>
        <dbReference type="Rhea" id="RHEA-COMP:11060"/>
        <dbReference type="Rhea" id="RHEA-COMP:11605"/>
        <dbReference type="ChEBI" id="CHEBI:15377"/>
        <dbReference type="ChEBI" id="CHEBI:30013"/>
        <dbReference type="ChEBI" id="CHEBI:43474"/>
        <dbReference type="ChEBI" id="CHEBI:61977"/>
        <dbReference type="EC" id="3.1.3.16"/>
    </reaction>
</comment>
<comment type="subunit">
    <text evidence="2">Interacts with Pk92B/ASK1.</text>
</comment>
<comment type="subcellular location">
    <subcellularLocation>
        <location evidence="2 3">Mitochondrion outer membrane</location>
        <topology evidence="1">Single-pass membrane protein</topology>
    </subcellularLocation>
</comment>
<comment type="similarity">
    <text evidence="3">Belongs to the phosphoglycerate mutase family. BPG-dependent PGAM subfamily.</text>
</comment>
<keyword id="KW-0378">Hydrolase</keyword>
<keyword id="KW-0472">Membrane</keyword>
<keyword id="KW-0496">Mitochondrion</keyword>
<keyword id="KW-1000">Mitochondrion outer membrane</keyword>
<keyword id="KW-1185">Reference proteome</keyword>
<keyword id="KW-0812">Transmembrane</keyword>
<keyword id="KW-1133">Transmembrane helix</keyword>
<reference evidence="5" key="1">
    <citation type="journal article" date="2007" name="Nature">
        <title>Evolution of genes and genomes on the Drosophila phylogeny.</title>
        <authorList>
            <consortium name="Drosophila 12 genomes consortium"/>
        </authorList>
    </citation>
    <scope>NUCLEOTIDE SEQUENCE [LARGE SCALE GENOMIC DNA]</scope>
    <source>
        <strain evidence="5">Tucson 14030-0811.24</strain>
    </source>
</reference>
<proteinExistence type="inferred from homology"/>